<accession>Q5F3Z5</accession>
<feature type="chain" id="PRO_0000292341" description="DnaJ homolog subfamily B member 6">
    <location>
        <begin position="1"/>
        <end position="326"/>
    </location>
</feature>
<feature type="domain" description="J" evidence="2">
    <location>
        <begin position="3"/>
        <end position="69"/>
    </location>
</feature>
<feature type="region of interest" description="Disordered" evidence="3">
    <location>
        <begin position="249"/>
        <end position="326"/>
    </location>
</feature>
<feature type="modified residue" description="Phosphoserine" evidence="1">
    <location>
        <position position="277"/>
    </location>
</feature>
<comment type="function">
    <text evidence="1">Has a stimulatory effect on the ATPase activity of HSP70 in a dose-dependent and time-dependent manner and hence acts as a co-chaperone of HSP70. Plays an indispensable role in the organization of KRT8/KRT18 filaments. Acts as an endogenous molecular chaperone for neuronal proteins including huntingtin. Suppresses aggregation and toxicity of polyglutamine-containing, aggregation-prone proteins. Also reduces cellular toxicity and caspase-3 activity.</text>
</comment>
<comment type="subunit">
    <text evidence="1">Homooligomer.</text>
</comment>
<comment type="subcellular location">
    <subcellularLocation>
        <location evidence="1">Cytoplasm</location>
        <location evidence="1">Perinuclear region</location>
    </subcellularLocation>
    <subcellularLocation>
        <location evidence="1">Nucleus</location>
    </subcellularLocation>
</comment>
<reference evidence="4" key="1">
    <citation type="journal article" date="2005" name="Genome Biol.">
        <title>Full-length cDNAs from chicken bursal lymphocytes to facilitate gene function analysis.</title>
        <authorList>
            <person name="Caldwell R.B."/>
            <person name="Kierzek A.M."/>
            <person name="Arakawa H."/>
            <person name="Bezzubov Y."/>
            <person name="Zaim J."/>
            <person name="Fiedler P."/>
            <person name="Kutter S."/>
            <person name="Blagodatski A."/>
            <person name="Kostovska D."/>
            <person name="Koter M."/>
            <person name="Plachy J."/>
            <person name="Carninci P."/>
            <person name="Hayashizaki Y."/>
            <person name="Buerstedde J.-M."/>
        </authorList>
    </citation>
    <scope>NUCLEOTIDE SEQUENCE [LARGE SCALE MRNA]</scope>
    <source>
        <strain evidence="4">CB</strain>
        <tissue evidence="4">Bursa of Fabricius</tissue>
    </source>
</reference>
<evidence type="ECO:0000250" key="1">
    <source>
        <dbReference type="UniProtKB" id="O75190"/>
    </source>
</evidence>
<evidence type="ECO:0000255" key="2">
    <source>
        <dbReference type="PROSITE-ProRule" id="PRU00286"/>
    </source>
</evidence>
<evidence type="ECO:0000256" key="3">
    <source>
        <dbReference type="SAM" id="MobiDB-lite"/>
    </source>
</evidence>
<evidence type="ECO:0000312" key="4">
    <source>
        <dbReference type="EMBL" id="CAH65139.1"/>
    </source>
</evidence>
<protein>
    <recommendedName>
        <fullName>DnaJ homolog subfamily B member 6</fullName>
    </recommendedName>
</protein>
<name>DNJB6_CHICK</name>
<proteinExistence type="evidence at transcript level"/>
<organism>
    <name type="scientific">Gallus gallus</name>
    <name type="common">Chicken</name>
    <dbReference type="NCBI Taxonomy" id="9031"/>
    <lineage>
        <taxon>Eukaryota</taxon>
        <taxon>Metazoa</taxon>
        <taxon>Chordata</taxon>
        <taxon>Craniata</taxon>
        <taxon>Vertebrata</taxon>
        <taxon>Euteleostomi</taxon>
        <taxon>Archelosauria</taxon>
        <taxon>Archosauria</taxon>
        <taxon>Dinosauria</taxon>
        <taxon>Saurischia</taxon>
        <taxon>Theropoda</taxon>
        <taxon>Coelurosauria</taxon>
        <taxon>Aves</taxon>
        <taxon>Neognathae</taxon>
        <taxon>Galloanserae</taxon>
        <taxon>Galliformes</taxon>
        <taxon>Phasianidae</taxon>
        <taxon>Phasianinae</taxon>
        <taxon>Gallus</taxon>
    </lineage>
</organism>
<sequence length="326" mass="36675">MVDYYEVLGVQKHASAEDIKKAYRKLALKWHPDKNPENKEEAEQQFKQVAEAYEVLSDAKKRDIYDRFGKEGLINGGGGGSHHDNPFEFGFTFRNPDDVFREFFGGRDPFSFDFFEDPFEDFFGGRRGPRGSRSRAGGSFLSAFGGFPAFGNAFPSFDTGFTSFGSLGHGGLTSFSSTSFGGSGMGNFKSVSTSTKIVNGRKITTKRIVENGQERVEVEEDGQLRSLTINGEANEEAFAEECRRRGQHALPFQPTNTRLLKPHKPASSPRYAYHYNSDEVEEQEKSRVASSLETPFYLSGYKEGSKRRKQKQREEQKKKKSTKGSY</sequence>
<gene>
    <name evidence="1" type="primary">DNAJB6</name>
    <name type="ORF">RCJMB04_4b8</name>
</gene>
<keyword id="KW-0143">Chaperone</keyword>
<keyword id="KW-0963">Cytoplasm</keyword>
<keyword id="KW-0539">Nucleus</keyword>
<keyword id="KW-0597">Phosphoprotein</keyword>
<keyword id="KW-1185">Reference proteome</keyword>
<dbReference type="EMBL" id="AJ851505">
    <property type="protein sequence ID" value="CAH65139.1"/>
    <property type="molecule type" value="mRNA"/>
</dbReference>
<dbReference type="RefSeq" id="NP_001012574.1">
    <property type="nucleotide sequence ID" value="NM_001012556.1"/>
</dbReference>
<dbReference type="RefSeq" id="XP_015136821.1">
    <property type="nucleotide sequence ID" value="XM_015281335.1"/>
</dbReference>
<dbReference type="SMR" id="Q5F3Z5"/>
<dbReference type="FunCoup" id="Q5F3Z5">
    <property type="interactions" value="336"/>
</dbReference>
<dbReference type="STRING" id="9031.ENSGALP00000010453"/>
<dbReference type="PaxDb" id="9031-ENSGALP00000010453"/>
<dbReference type="GeneID" id="420448"/>
<dbReference type="KEGG" id="gga:420448"/>
<dbReference type="CTD" id="10049"/>
<dbReference type="VEuPathDB" id="HostDB:geneid_420448"/>
<dbReference type="eggNOG" id="KOG0714">
    <property type="taxonomic scope" value="Eukaryota"/>
</dbReference>
<dbReference type="HOGENOM" id="CLU_017633_12_0_1"/>
<dbReference type="InParanoid" id="Q5F3Z5"/>
<dbReference type="OrthoDB" id="10250354at2759"/>
<dbReference type="PhylomeDB" id="Q5F3Z5"/>
<dbReference type="TreeFam" id="TF105142"/>
<dbReference type="PRO" id="PR:Q5F3Z5"/>
<dbReference type="Proteomes" id="UP000000539">
    <property type="component" value="Chromosome 2"/>
</dbReference>
<dbReference type="Bgee" id="ENSGALG00000006477">
    <property type="expression patterns" value="Expressed in heart and 14 other cell types or tissues"/>
</dbReference>
<dbReference type="GO" id="GO:0005737">
    <property type="term" value="C:cytoplasm"/>
    <property type="evidence" value="ECO:0000318"/>
    <property type="project" value="GO_Central"/>
</dbReference>
<dbReference type="GO" id="GO:0005634">
    <property type="term" value="C:nucleus"/>
    <property type="evidence" value="ECO:0000318"/>
    <property type="project" value="GO_Central"/>
</dbReference>
<dbReference type="GO" id="GO:0048471">
    <property type="term" value="C:perinuclear region of cytoplasm"/>
    <property type="evidence" value="ECO:0007669"/>
    <property type="project" value="UniProtKB-SubCell"/>
</dbReference>
<dbReference type="GO" id="GO:0030544">
    <property type="term" value="F:Hsp70 protein binding"/>
    <property type="evidence" value="ECO:0007669"/>
    <property type="project" value="InterPro"/>
</dbReference>
<dbReference type="GO" id="GO:0044183">
    <property type="term" value="F:protein folding chaperone"/>
    <property type="evidence" value="ECO:0000318"/>
    <property type="project" value="GO_Central"/>
</dbReference>
<dbReference type="GO" id="GO:0051087">
    <property type="term" value="F:protein-folding chaperone binding"/>
    <property type="evidence" value="ECO:0000318"/>
    <property type="project" value="GO_Central"/>
</dbReference>
<dbReference type="GO" id="GO:0051082">
    <property type="term" value="F:unfolded protein binding"/>
    <property type="evidence" value="ECO:0000318"/>
    <property type="project" value="GO_Central"/>
</dbReference>
<dbReference type="GO" id="GO:0061077">
    <property type="term" value="P:chaperone-mediated protein folding"/>
    <property type="evidence" value="ECO:0000318"/>
    <property type="project" value="GO_Central"/>
</dbReference>
<dbReference type="CDD" id="cd06257">
    <property type="entry name" value="DnaJ"/>
    <property type="match status" value="1"/>
</dbReference>
<dbReference type="FunFam" id="1.10.287.110:FF:000022">
    <property type="entry name" value="DnaJ homolog subfamily B member 6"/>
    <property type="match status" value="1"/>
</dbReference>
<dbReference type="Gene3D" id="1.10.287.110">
    <property type="entry name" value="DnaJ domain"/>
    <property type="match status" value="1"/>
</dbReference>
<dbReference type="InterPro" id="IPR001623">
    <property type="entry name" value="DnaJ_domain"/>
</dbReference>
<dbReference type="InterPro" id="IPR018253">
    <property type="entry name" value="DnaJ_domain_CS"/>
</dbReference>
<dbReference type="InterPro" id="IPR043183">
    <property type="entry name" value="DNJB2/6-like"/>
</dbReference>
<dbReference type="InterPro" id="IPR036869">
    <property type="entry name" value="J_dom_sf"/>
</dbReference>
<dbReference type="PANTHER" id="PTHR45168">
    <property type="entry name" value="DNAJ HOMOLOG SUBFAMILY B MEMBER 2"/>
    <property type="match status" value="1"/>
</dbReference>
<dbReference type="PANTHER" id="PTHR45168:SF4">
    <property type="entry name" value="SIMILAR TO DNAJ HOMOLOG SUBFAMILY B MEMBER 6 (HEAT SHOCK PROTEIN J2) (HSJ-2) (MRJ) (MDJ4)"/>
    <property type="match status" value="1"/>
</dbReference>
<dbReference type="Pfam" id="PF00226">
    <property type="entry name" value="DnaJ"/>
    <property type="match status" value="1"/>
</dbReference>
<dbReference type="PRINTS" id="PR00625">
    <property type="entry name" value="JDOMAIN"/>
</dbReference>
<dbReference type="SMART" id="SM00271">
    <property type="entry name" value="DnaJ"/>
    <property type="match status" value="1"/>
</dbReference>
<dbReference type="SUPFAM" id="SSF46565">
    <property type="entry name" value="Chaperone J-domain"/>
    <property type="match status" value="1"/>
</dbReference>
<dbReference type="PROSITE" id="PS00636">
    <property type="entry name" value="DNAJ_1"/>
    <property type="match status" value="1"/>
</dbReference>
<dbReference type="PROSITE" id="PS50076">
    <property type="entry name" value="DNAJ_2"/>
    <property type="match status" value="1"/>
</dbReference>